<protein>
    <recommendedName>
        <fullName evidence="1">Small ribosomal subunit protein uS13</fullName>
    </recommendedName>
    <alternativeName>
        <fullName evidence="2">30S ribosomal protein S13</fullName>
    </alternativeName>
</protein>
<gene>
    <name evidence="1" type="primary">rps13</name>
    <name type="ordered locus">Pisl_0910</name>
</gene>
<sequence>MSQEIRAIVRIGDTDLDGNKQVAYSLTKIRGIGIATAYAICRKLGIDPHAILGALSEEQINKLDWAVRNLHELAPAWFLNRRKDPETGKDLHLIGAELVLAAKRDVDLMKKLKSWKGVRHSLGLKVRGQRTVTTGRLGPVAGVTKKKAAAGGK</sequence>
<dbReference type="EMBL" id="CP000504">
    <property type="protein sequence ID" value="ABL88086.1"/>
    <property type="molecule type" value="Genomic_DNA"/>
</dbReference>
<dbReference type="RefSeq" id="WP_011762661.1">
    <property type="nucleotide sequence ID" value="NC_008701.1"/>
</dbReference>
<dbReference type="SMR" id="A1RT04"/>
<dbReference type="STRING" id="384616.Pisl_0910"/>
<dbReference type="GeneID" id="4617766"/>
<dbReference type="KEGG" id="pis:Pisl_0910"/>
<dbReference type="eggNOG" id="arCOG01722">
    <property type="taxonomic scope" value="Archaea"/>
</dbReference>
<dbReference type="HOGENOM" id="CLU_103849_0_0_2"/>
<dbReference type="OrthoDB" id="372127at2157"/>
<dbReference type="Proteomes" id="UP000002595">
    <property type="component" value="Chromosome"/>
</dbReference>
<dbReference type="GO" id="GO:0005829">
    <property type="term" value="C:cytosol"/>
    <property type="evidence" value="ECO:0007669"/>
    <property type="project" value="TreeGrafter"/>
</dbReference>
<dbReference type="GO" id="GO:0015935">
    <property type="term" value="C:small ribosomal subunit"/>
    <property type="evidence" value="ECO:0007669"/>
    <property type="project" value="TreeGrafter"/>
</dbReference>
<dbReference type="GO" id="GO:0019843">
    <property type="term" value="F:rRNA binding"/>
    <property type="evidence" value="ECO:0007669"/>
    <property type="project" value="UniProtKB-UniRule"/>
</dbReference>
<dbReference type="GO" id="GO:0003735">
    <property type="term" value="F:structural constituent of ribosome"/>
    <property type="evidence" value="ECO:0007669"/>
    <property type="project" value="InterPro"/>
</dbReference>
<dbReference type="GO" id="GO:0006412">
    <property type="term" value="P:translation"/>
    <property type="evidence" value="ECO:0007669"/>
    <property type="project" value="UniProtKB-UniRule"/>
</dbReference>
<dbReference type="FunFam" id="1.10.8.50:FF:000001">
    <property type="entry name" value="30S ribosomal protein S13"/>
    <property type="match status" value="1"/>
</dbReference>
<dbReference type="Gene3D" id="1.10.8.50">
    <property type="match status" value="1"/>
</dbReference>
<dbReference type="Gene3D" id="4.10.910.10">
    <property type="entry name" value="30s ribosomal protein s13, domain 2"/>
    <property type="match status" value="1"/>
</dbReference>
<dbReference type="HAMAP" id="MF_01315">
    <property type="entry name" value="Ribosomal_uS13"/>
    <property type="match status" value="1"/>
</dbReference>
<dbReference type="InterPro" id="IPR027437">
    <property type="entry name" value="Rbsml_uS13_C"/>
</dbReference>
<dbReference type="InterPro" id="IPR001892">
    <property type="entry name" value="Ribosomal_uS13"/>
</dbReference>
<dbReference type="InterPro" id="IPR010979">
    <property type="entry name" value="Ribosomal_uS13-like_H2TH"/>
</dbReference>
<dbReference type="InterPro" id="IPR019977">
    <property type="entry name" value="Ribosomal_uS13_archaeal"/>
</dbReference>
<dbReference type="InterPro" id="IPR018269">
    <property type="entry name" value="Ribosomal_uS13_CS"/>
</dbReference>
<dbReference type="NCBIfam" id="NF003140">
    <property type="entry name" value="PRK04053.1"/>
    <property type="match status" value="1"/>
</dbReference>
<dbReference type="NCBIfam" id="TIGR03629">
    <property type="entry name" value="uS13_arch"/>
    <property type="match status" value="1"/>
</dbReference>
<dbReference type="PANTHER" id="PTHR10871">
    <property type="entry name" value="30S RIBOSOMAL PROTEIN S13/40S RIBOSOMAL PROTEIN S18"/>
    <property type="match status" value="1"/>
</dbReference>
<dbReference type="PANTHER" id="PTHR10871:SF3">
    <property type="entry name" value="SMALL RIBOSOMAL SUBUNIT PROTEIN US13"/>
    <property type="match status" value="1"/>
</dbReference>
<dbReference type="Pfam" id="PF00416">
    <property type="entry name" value="Ribosomal_S13"/>
    <property type="match status" value="1"/>
</dbReference>
<dbReference type="PIRSF" id="PIRSF002134">
    <property type="entry name" value="Ribosomal_S13"/>
    <property type="match status" value="1"/>
</dbReference>
<dbReference type="SUPFAM" id="SSF46946">
    <property type="entry name" value="S13-like H2TH domain"/>
    <property type="match status" value="1"/>
</dbReference>
<dbReference type="PROSITE" id="PS00646">
    <property type="entry name" value="RIBOSOMAL_S13_1"/>
    <property type="match status" value="1"/>
</dbReference>
<dbReference type="PROSITE" id="PS50159">
    <property type="entry name" value="RIBOSOMAL_S13_2"/>
    <property type="match status" value="1"/>
</dbReference>
<name>RS13_PYRIL</name>
<accession>A1RT04</accession>
<feature type="chain" id="PRO_0000306765" description="Small ribosomal subunit protein uS13">
    <location>
        <begin position="1"/>
        <end position="153"/>
    </location>
</feature>
<keyword id="KW-0687">Ribonucleoprotein</keyword>
<keyword id="KW-0689">Ribosomal protein</keyword>
<keyword id="KW-0694">RNA-binding</keyword>
<keyword id="KW-0699">rRNA-binding</keyword>
<evidence type="ECO:0000255" key="1">
    <source>
        <dbReference type="HAMAP-Rule" id="MF_01315"/>
    </source>
</evidence>
<evidence type="ECO:0000305" key="2"/>
<reference key="1">
    <citation type="submission" date="2006-12" db="EMBL/GenBank/DDBJ databases">
        <title>Complete sequence of Pyrobaculum islandicum DSM 4184.</title>
        <authorList>
            <person name="Copeland A."/>
            <person name="Lucas S."/>
            <person name="Lapidus A."/>
            <person name="Barry K."/>
            <person name="Detter J.C."/>
            <person name="Glavina del Rio T."/>
            <person name="Dalin E."/>
            <person name="Tice H."/>
            <person name="Pitluck S."/>
            <person name="Meincke L."/>
            <person name="Brettin T."/>
            <person name="Bruce D."/>
            <person name="Han C."/>
            <person name="Tapia R."/>
            <person name="Gilna P."/>
            <person name="Schmutz J."/>
            <person name="Larimer F."/>
            <person name="Land M."/>
            <person name="Hauser L."/>
            <person name="Kyrpides N."/>
            <person name="Mikhailova N."/>
            <person name="Cozen A.E."/>
            <person name="Fitz-Gibbon S.T."/>
            <person name="House C.H."/>
            <person name="Saltikov C."/>
            <person name="Lowe T."/>
            <person name="Richardson P."/>
        </authorList>
    </citation>
    <scope>NUCLEOTIDE SEQUENCE [LARGE SCALE GENOMIC DNA]</scope>
    <source>
        <strain>DSM 4184 / JCM 9189 / GEO3</strain>
    </source>
</reference>
<comment type="function">
    <text evidence="1">Located at the top of the head of the 30S subunit, it contacts several helices of the 16S rRNA. In the 70S ribosome it contacts the 23S rRNA (bridge B1a) and protein L5 of the 50S subunit (bridge B1b), connecting the 2 subunits; these bridges are implicated in subunit movement.</text>
</comment>
<comment type="subunit">
    <text evidence="1">Part of the 30S ribosomal subunit. Forms a loose heterodimer with protein S19. Forms two bridges to the 50S subunit in the 70S ribosome.</text>
</comment>
<comment type="similarity">
    <text evidence="1">Belongs to the universal ribosomal protein uS13 family.</text>
</comment>
<organism>
    <name type="scientific">Pyrobaculum islandicum (strain DSM 4184 / JCM 9189 / GEO3)</name>
    <dbReference type="NCBI Taxonomy" id="384616"/>
    <lineage>
        <taxon>Archaea</taxon>
        <taxon>Thermoproteota</taxon>
        <taxon>Thermoprotei</taxon>
        <taxon>Thermoproteales</taxon>
        <taxon>Thermoproteaceae</taxon>
        <taxon>Pyrobaculum</taxon>
    </lineage>
</organism>
<proteinExistence type="inferred from homology"/>